<accession>O45365</accession>
<name>NH176_CAEEL</name>
<dbReference type="EMBL" id="BX284605">
    <property type="protein sequence ID" value="CAB05485.2"/>
    <property type="molecule type" value="Genomic_DNA"/>
</dbReference>
<dbReference type="PIR" id="T20924">
    <property type="entry name" value="T20924"/>
</dbReference>
<dbReference type="RefSeq" id="NP_507045.2">
    <property type="nucleotide sequence ID" value="NM_074644.3"/>
</dbReference>
<dbReference type="SMR" id="O45365"/>
<dbReference type="FunCoup" id="O45365">
    <property type="interactions" value="423"/>
</dbReference>
<dbReference type="STRING" id="6239.F14H3.11.1"/>
<dbReference type="PaxDb" id="6239-F14H3.11"/>
<dbReference type="EnsemblMetazoa" id="F14H3.11.1">
    <property type="protein sequence ID" value="F14H3.11.1"/>
    <property type="gene ID" value="WBGene00008830"/>
</dbReference>
<dbReference type="GeneID" id="184496"/>
<dbReference type="KEGG" id="cel:CELE_F14H3.11"/>
<dbReference type="UCSC" id="F14H3.11">
    <property type="organism name" value="c. elegans"/>
</dbReference>
<dbReference type="AGR" id="WB:WBGene00008830"/>
<dbReference type="CTD" id="184496"/>
<dbReference type="WormBase" id="F14H3.11">
    <property type="protein sequence ID" value="CE35482"/>
    <property type="gene ID" value="WBGene00008830"/>
    <property type="gene designation" value="nhr-176"/>
</dbReference>
<dbReference type="eggNOG" id="KOG3575">
    <property type="taxonomic scope" value="Eukaryota"/>
</dbReference>
<dbReference type="GeneTree" id="ENSGT00970000196002"/>
<dbReference type="HOGENOM" id="CLU_007368_1_1_1"/>
<dbReference type="InParanoid" id="O45365"/>
<dbReference type="OMA" id="ENCNTIR"/>
<dbReference type="OrthoDB" id="10018779at2759"/>
<dbReference type="PhylomeDB" id="O45365"/>
<dbReference type="PRO" id="PR:O45365"/>
<dbReference type="Proteomes" id="UP000001940">
    <property type="component" value="Chromosome V"/>
</dbReference>
<dbReference type="Bgee" id="WBGene00008830">
    <property type="expression patterns" value="Expressed in adult organism and 3 other cell types or tissues"/>
</dbReference>
<dbReference type="GO" id="GO:0005634">
    <property type="term" value="C:nucleus"/>
    <property type="evidence" value="ECO:0000318"/>
    <property type="project" value="GO_Central"/>
</dbReference>
<dbReference type="GO" id="GO:0003700">
    <property type="term" value="F:DNA-binding transcription factor activity"/>
    <property type="evidence" value="ECO:0000318"/>
    <property type="project" value="GO_Central"/>
</dbReference>
<dbReference type="GO" id="GO:0043565">
    <property type="term" value="F:sequence-specific DNA binding"/>
    <property type="evidence" value="ECO:0007669"/>
    <property type="project" value="InterPro"/>
</dbReference>
<dbReference type="GO" id="GO:0008270">
    <property type="term" value="F:zinc ion binding"/>
    <property type="evidence" value="ECO:0007669"/>
    <property type="project" value="UniProtKB-KW"/>
</dbReference>
<dbReference type="GO" id="GO:0006357">
    <property type="term" value="P:regulation of transcription by RNA polymerase II"/>
    <property type="evidence" value="ECO:0000318"/>
    <property type="project" value="GO_Central"/>
</dbReference>
<dbReference type="Gene3D" id="3.30.50.10">
    <property type="entry name" value="Erythroid Transcription Factor GATA-1, subunit A"/>
    <property type="match status" value="1"/>
</dbReference>
<dbReference type="Gene3D" id="1.10.565.10">
    <property type="entry name" value="Retinoid X Receptor"/>
    <property type="match status" value="1"/>
</dbReference>
<dbReference type="InterPro" id="IPR035500">
    <property type="entry name" value="NHR-like_dom_sf"/>
</dbReference>
<dbReference type="InterPro" id="IPR000536">
    <property type="entry name" value="Nucl_hrmn_rcpt_lig-bd"/>
</dbReference>
<dbReference type="InterPro" id="IPR001628">
    <property type="entry name" value="Znf_hrmn_rcpt"/>
</dbReference>
<dbReference type="InterPro" id="IPR013088">
    <property type="entry name" value="Znf_NHR/GATA"/>
</dbReference>
<dbReference type="PANTHER" id="PTHR46011">
    <property type="entry name" value="NUCLEAR HORMONE RECEPTOR FAMILY MEMBER NHR-86-RELATED"/>
    <property type="match status" value="1"/>
</dbReference>
<dbReference type="PANTHER" id="PTHR46011:SF17">
    <property type="entry name" value="NUCLEAR HORMONE RECEPTOR FAMILY-RELATED"/>
    <property type="match status" value="1"/>
</dbReference>
<dbReference type="Pfam" id="PF00104">
    <property type="entry name" value="Hormone_recep"/>
    <property type="match status" value="1"/>
</dbReference>
<dbReference type="Pfam" id="PF00105">
    <property type="entry name" value="zf-C4"/>
    <property type="match status" value="1"/>
</dbReference>
<dbReference type="PRINTS" id="PR00047">
    <property type="entry name" value="STROIDFINGER"/>
</dbReference>
<dbReference type="SMART" id="SM00430">
    <property type="entry name" value="HOLI"/>
    <property type="match status" value="1"/>
</dbReference>
<dbReference type="SMART" id="SM00399">
    <property type="entry name" value="ZnF_C4"/>
    <property type="match status" value="1"/>
</dbReference>
<dbReference type="SUPFAM" id="SSF57716">
    <property type="entry name" value="Glucocorticoid receptor-like (DNA-binding domain)"/>
    <property type="match status" value="1"/>
</dbReference>
<dbReference type="SUPFAM" id="SSF48508">
    <property type="entry name" value="Nuclear receptor ligand-binding domain"/>
    <property type="match status" value="1"/>
</dbReference>
<dbReference type="PROSITE" id="PS51843">
    <property type="entry name" value="NR_LBD"/>
    <property type="match status" value="1"/>
</dbReference>
<dbReference type="PROSITE" id="PS51030">
    <property type="entry name" value="NUCLEAR_REC_DBD_2"/>
    <property type="match status" value="1"/>
</dbReference>
<protein>
    <recommendedName>
        <fullName evidence="9">Nuclear hormone receptor family nhr-176</fullName>
    </recommendedName>
</protein>
<feature type="chain" id="PRO_0000458541" description="Nuclear hormone receptor family nhr-176">
    <location>
        <begin position="1"/>
        <end position="345"/>
    </location>
</feature>
<feature type="domain" description="NR LBD" evidence="2">
    <location>
        <begin position="92"/>
        <end position="342"/>
    </location>
</feature>
<feature type="DNA-binding region" description="Nuclear receptor" evidence="1">
    <location>
        <begin position="7"/>
        <end position="82"/>
    </location>
</feature>
<feature type="zinc finger region" description="NR C4-type" evidence="1">
    <location>
        <begin position="10"/>
        <end position="30"/>
    </location>
</feature>
<feature type="zinc finger region" description="NR C4-type; degenerate" evidence="1">
    <location>
        <begin position="46"/>
        <end position="65"/>
    </location>
</feature>
<feature type="region of interest" description="AF-2" evidence="2">
    <location>
        <begin position="331"/>
        <end position="342"/>
    </location>
</feature>
<sequence>MTKKSTIQPCLVCGQSSNSILFGAPSCRACGEFFRRKVISNFKIKNNCLGECSFAKKSMKPCQSCRFQKCLEAGMLEKMVFSRKAIYSISNFEKSILEELEEAYSKLEHGRNETFNPKSDSNPKFCSHEELNNTCTIDIQIILDNLISYFQAKKPMGKEQDDVLKMHFIVPFVLFDTAFRAIGKSSYISPDGTMFGGSYVEKLYQDSSNSKIGVNNGKTSREIMESYWKVSYKILKSEMELLQLDRSEFLLLSALIYWDFGLENQSDKCCENCNTIREKVLKELVKYERKKSGQNALRIAMIMGLLQAVPKALDVMKTCGFLSKIYNLRGSGCPLYAISTNSPPQ</sequence>
<comment type="function">
    <text evidence="3 4">Nuclear hormone receptor (PubMed:25406993). Binds to xenobiotic ligand thiabendazole (TBZ), in vitro (PubMed:25406993). Involved in the up-regulation of phase I detoxification genes, such as probable cytochrome P450 cyp-35d1, in response to TBZ (PubMed:23922869, PubMed:25406993).</text>
</comment>
<comment type="subcellular location">
    <subcellularLocation>
        <location evidence="1">Nucleus</location>
    </subcellularLocation>
</comment>
<comment type="disruption phenotype">
    <text evidence="3 4 5">RNAi-mediated knockdown results in reduced egg-laying in the presence of the xenobiotic thiabendazole (TBZ) (PubMed:23922869). Not affected by 5-hydroxythiabendazole (PubMed:23922869). Reduced expression of cytochrome P450 cyp-35d1; expression reduced further in the presence of thiabendazole (PubMed:23922869, PubMed:25406993).</text>
</comment>
<comment type="miscellaneous">
    <text evidence="6">Thiabendazole (TBZ) is used as a broad-spectrum anthelmintic to treat parasitic nematode infections in humans and veterinary animals.</text>
</comment>
<organism evidence="8">
    <name type="scientific">Caenorhabditis elegans</name>
    <dbReference type="NCBI Taxonomy" id="6239"/>
    <lineage>
        <taxon>Eukaryota</taxon>
        <taxon>Metazoa</taxon>
        <taxon>Ecdysozoa</taxon>
        <taxon>Nematoda</taxon>
        <taxon>Chromadorea</taxon>
        <taxon>Rhabditida</taxon>
        <taxon>Rhabditina</taxon>
        <taxon>Rhabditomorpha</taxon>
        <taxon>Rhabditoidea</taxon>
        <taxon>Rhabditidae</taxon>
        <taxon>Peloderinae</taxon>
        <taxon>Caenorhabditis</taxon>
    </lineage>
</organism>
<evidence type="ECO:0000255" key="1">
    <source>
        <dbReference type="PROSITE-ProRule" id="PRU00407"/>
    </source>
</evidence>
<evidence type="ECO:0000255" key="2">
    <source>
        <dbReference type="PROSITE-ProRule" id="PRU01189"/>
    </source>
</evidence>
<evidence type="ECO:0000269" key="3">
    <source>
    </source>
</evidence>
<evidence type="ECO:0000269" key="4">
    <source>
    </source>
</evidence>
<evidence type="ECO:0000303" key="5">
    <source>
    </source>
</evidence>
<evidence type="ECO:0000303" key="6">
    <source>
    </source>
</evidence>
<evidence type="ECO:0000305" key="7"/>
<evidence type="ECO:0000312" key="8">
    <source>
        <dbReference type="Proteomes" id="UP000001940"/>
    </source>
</evidence>
<evidence type="ECO:0000312" key="9">
    <source>
        <dbReference type="WormBase" id="F14H3.11"/>
    </source>
</evidence>
<gene>
    <name evidence="9" type="primary">nhr-176</name>
    <name evidence="9" type="ORF">F14H3.11</name>
</gene>
<proteinExistence type="evidence at transcript level"/>
<keyword id="KW-0238">DNA-binding</keyword>
<keyword id="KW-0479">Metal-binding</keyword>
<keyword id="KW-0539">Nucleus</keyword>
<keyword id="KW-0675">Receptor</keyword>
<keyword id="KW-1185">Reference proteome</keyword>
<keyword id="KW-0804">Transcription</keyword>
<keyword id="KW-0805">Transcription regulation</keyword>
<keyword id="KW-0862">Zinc</keyword>
<keyword id="KW-0863">Zinc-finger</keyword>
<reference evidence="8" key="1">
    <citation type="journal article" date="1998" name="Science">
        <title>Genome sequence of the nematode C. elegans: a platform for investigating biology.</title>
        <authorList>
            <consortium name="The C. elegans sequencing consortium"/>
        </authorList>
    </citation>
    <scope>NUCLEOTIDE SEQUENCE [LARGE SCALE GENOMIC DNA]</scope>
    <source>
        <strain evidence="8">Bristol N2</strain>
    </source>
</reference>
<reference evidence="7" key="2">
    <citation type="journal article" date="2013" name="PLoS ONE">
        <title>Adaptive and specialised transcriptional responses to xenobiotic stress in Caenorhabditis elegans are regulated by nuclear hormone receptors.</title>
        <authorList>
            <person name="Jones L.M."/>
            <person name="Rayson S.J."/>
            <person name="Flemming A.J."/>
            <person name="Urwin P.E."/>
        </authorList>
    </citation>
    <scope>FUNCTION</scope>
    <scope>DISRUPTION PHENOTYPE</scope>
</reference>
<reference evidence="7" key="3">
    <citation type="journal article" date="2015" name="Biochem. J.">
        <title>NHR-176 regulates cyp-35d1 to control hydroxylation-dependent metabolism of thiabendazole in Caenorhabditis elegans.</title>
        <authorList>
            <person name="Jones L.M."/>
            <person name="Flemming A.J."/>
            <person name="Urwin P.E."/>
        </authorList>
    </citation>
    <scope>FUNCTION</scope>
    <scope>TISSUE SPECIFICITY</scope>
    <scope>DISRUPTION PHENOTYPE</scope>
</reference>